<keyword id="KW-0244">Early protein</keyword>
<keyword id="KW-1035">Host cytoplasm</keyword>
<keyword id="KW-1048">Host nucleus</keyword>
<evidence type="ECO:0000250" key="1">
    <source>
        <dbReference type="UniProtKB" id="P03239"/>
    </source>
</evidence>
<evidence type="ECO:0000305" key="2"/>
<feature type="chain" id="PRO_0000221780" description="Early E4 31 kDa protein">
    <location>
        <begin position="1"/>
        <end position="265"/>
    </location>
</feature>
<reference key="1">
    <citation type="submission" date="1996-08" db="EMBL/GenBank/DDBJ databases">
        <title>DNA sequence and genomic organization of canine adenovirus type 1.</title>
        <authorList>
            <person name="Campbell J.B."/>
            <person name="Zhao Y."/>
        </authorList>
    </citation>
    <scope>NUCLEOTIDE SEQUENCE [LARGE SCALE GENOMIC DNA]</scope>
</reference>
<reference key="2">
    <citation type="journal article" date="1991" name="Virology">
        <title>Sequence analysis of putative E3 and fiber genomic regions of two strains of canine adenovirus type 1.</title>
        <authorList>
            <person name="Dragulev B.P."/>
            <person name="Sira S."/>
            <person name="Abouhaidar M.G."/>
            <person name="Campbell J.B."/>
        </authorList>
    </citation>
    <scope>NUCLEOTIDE SEQUENCE [GENOMIC DNA] OF 248-265</scope>
</reference>
<dbReference type="EMBL" id="U55001">
    <property type="protein sequence ID" value="AAB05452.1"/>
    <property type="molecule type" value="Genomic_DNA"/>
</dbReference>
<dbReference type="GO" id="GO:0030430">
    <property type="term" value="C:host cell cytoplasm"/>
    <property type="evidence" value="ECO:0007669"/>
    <property type="project" value="UniProtKB-SubCell"/>
</dbReference>
<dbReference type="GO" id="GO:0042025">
    <property type="term" value="C:host cell nucleus"/>
    <property type="evidence" value="ECO:0007669"/>
    <property type="project" value="UniProtKB-SubCell"/>
</dbReference>
<dbReference type="InterPro" id="IPR007615">
    <property type="entry name" value="Adenovirus_E4_30/34"/>
</dbReference>
<dbReference type="Pfam" id="PF04528">
    <property type="entry name" value="Adeno_E4_34"/>
    <property type="match status" value="1"/>
</dbReference>
<organismHost>
    <name type="scientific">Canis lupus familiaris</name>
    <name type="common">Dog</name>
    <name type="synonym">Canis familiaris</name>
    <dbReference type="NCBI Taxonomy" id="9615"/>
</organismHost>
<name>E434_ADECC</name>
<organism>
    <name type="scientific">Canine adenovirus serotype 1 (strain CLL)</name>
    <name type="common">CAdV-1</name>
    <name type="synonym">Canine adenovirus 1 (strain CLL)</name>
    <dbReference type="NCBI Taxonomy" id="69150"/>
    <lineage>
        <taxon>Viruses</taxon>
        <taxon>Varidnaviria</taxon>
        <taxon>Bamfordvirae</taxon>
        <taxon>Preplasmiviricota</taxon>
        <taxon>Tectiliviricetes</taxon>
        <taxon>Rowavirales</taxon>
        <taxon>Adenoviridae</taxon>
        <taxon>Mastadenovirus</taxon>
        <taxon>Canine mastadenovirus A</taxon>
    </lineage>
</organism>
<sequence>MFHNCRMEGSCNAETTSHVTAVVRAPIFCNCFALCLEIPILWDDLLYRHEKLLFGGFTCNGGAELILNSHCCLADAQMWQVHCHCSDSLSLQCLSRTQVLKEFLEEFVMGGFVNKKYLWYREFVNSSRPDEINYVGSIMFRNIHYIYFRLSFFSTVHQACMLAIQRCISPELGVVFKSTYNYWLVLKCKSCSLQNYCALKSCAFWVRSIIDRVLREVEKIPVVLHRTTSKAEERRQTALKQAMMYGRCRHIQNLCLVNLNAFLHF</sequence>
<comment type="function">
    <text evidence="1">Plays a major role to prevent cellular inhibition of viral genome replication by nuclear bodies. Assembles an SCF-like E3 ubiquitin ligase complex based on the cellular proteins ELOB, ELOC, CUL5 and RBX1, in cooperation with viral E1B-55K. This viral RING-type ligase ubiquitinates cellular substrates prior to proteasomal degradation: p53/TP53, LIG4, MRE11-RAD50-NBS1 (MRN) complex, ITGA3, DAXX and BLM.</text>
</comment>
<comment type="subunit">
    <text evidence="1">Interacts with E1B-55k.</text>
</comment>
<comment type="subcellular location">
    <subcellularLocation>
        <location evidence="1">Host nucleus</location>
    </subcellularLocation>
    <subcellularLocation>
        <location evidence="1">Host cytoplasm</location>
    </subcellularLocation>
</comment>
<comment type="similarity">
    <text evidence="2">Belongs to the adenoviridae E4 30 to 34 kDa protein family.</text>
</comment>
<protein>
    <recommendedName>
        <fullName>Early E4 31 kDa protein</fullName>
    </recommendedName>
</protein>
<proteinExistence type="inferred from homology"/>
<accession>Q65962</accession>